<name>YCF4_GNEPA</name>
<dbReference type="EMBL" id="AB295959">
    <property type="protein sequence ID" value="BAF64908.1"/>
    <property type="status" value="ALT_INIT"/>
    <property type="molecule type" value="Genomic_DNA"/>
</dbReference>
<dbReference type="EMBL" id="AP009569">
    <property type="protein sequence ID" value="BAH11283.1"/>
    <property type="status" value="ALT_INIT"/>
    <property type="molecule type" value="Genomic_DNA"/>
</dbReference>
<dbReference type="RefSeq" id="YP_002519772.1">
    <property type="nucleotide sequence ID" value="NC_011942.1"/>
</dbReference>
<dbReference type="GeneID" id="7368144"/>
<dbReference type="GO" id="GO:0009535">
    <property type="term" value="C:chloroplast thylakoid membrane"/>
    <property type="evidence" value="ECO:0007669"/>
    <property type="project" value="UniProtKB-SubCell"/>
</dbReference>
<dbReference type="GO" id="GO:0009522">
    <property type="term" value="C:photosystem I"/>
    <property type="evidence" value="ECO:0007669"/>
    <property type="project" value="InterPro"/>
</dbReference>
<dbReference type="GO" id="GO:0015979">
    <property type="term" value="P:photosynthesis"/>
    <property type="evidence" value="ECO:0007669"/>
    <property type="project" value="UniProtKB-UniRule"/>
</dbReference>
<dbReference type="HAMAP" id="MF_00437">
    <property type="entry name" value="Ycf4"/>
    <property type="match status" value="1"/>
</dbReference>
<dbReference type="InterPro" id="IPR003359">
    <property type="entry name" value="PSI_Ycf4_assembly"/>
</dbReference>
<dbReference type="PANTHER" id="PTHR33288">
    <property type="match status" value="1"/>
</dbReference>
<dbReference type="PANTHER" id="PTHR33288:SF4">
    <property type="entry name" value="PHOTOSYSTEM I ASSEMBLY PROTEIN YCF4"/>
    <property type="match status" value="1"/>
</dbReference>
<dbReference type="Pfam" id="PF02392">
    <property type="entry name" value="Ycf4"/>
    <property type="match status" value="1"/>
</dbReference>
<feature type="chain" id="PRO_0000326010" description="Photosystem I assembly protein Ycf4">
    <location>
        <begin position="1"/>
        <end position="185"/>
    </location>
</feature>
<feature type="transmembrane region" description="Helical" evidence="1">
    <location>
        <begin position="22"/>
        <end position="42"/>
    </location>
</feature>
<feature type="transmembrane region" description="Helical" evidence="1">
    <location>
        <begin position="57"/>
        <end position="77"/>
    </location>
</feature>
<feature type="transmembrane region" description="Helical" evidence="1">
    <location>
        <begin position="101"/>
        <end position="121"/>
    </location>
</feature>
<proteinExistence type="inferred from homology"/>
<comment type="function">
    <text evidence="1">Seems to be required for the assembly of the photosystem I complex.</text>
</comment>
<comment type="subcellular location">
    <subcellularLocation>
        <location evidence="1">Plastid</location>
        <location evidence="1">Chloroplast thylakoid membrane</location>
        <topology evidence="1">Multi-pass membrane protein</topology>
    </subcellularLocation>
</comment>
<comment type="similarity">
    <text evidence="1">Belongs to the Ycf4 family.</text>
</comment>
<comment type="sequence caution" evidence="2">
    <conflict type="erroneous initiation">
        <sequence resource="EMBL-CDS" id="BAF64908"/>
    </conflict>
</comment>
<comment type="sequence caution" evidence="2">
    <conflict type="erroneous initiation">
        <sequence resource="EMBL-CDS" id="BAH11283"/>
    </conflict>
</comment>
<sequence length="185" mass="21055">MNHQAKRLWIEPIKGSRRKSNFFFASIILGGALGFLLVGFSSYIGRNLVPPLLSHQILFVPQGIVMCFYGIAGLFFSSYLWCTILFNVGGGYNKIMKKKEFYVFFAGVSQGKIVVFFLRVPLKNVQTIKMEVQESLFYSRHVLYMKVKGLPDIPLARTGDHFNLSEMEQKAAELAHFLRVSIEGF</sequence>
<protein>
    <recommendedName>
        <fullName evidence="1">Photosystem I assembly protein Ycf4</fullName>
    </recommendedName>
</protein>
<organism>
    <name type="scientific">Gnetum parvifolium</name>
    <name type="common">Small-leaved jointfir</name>
    <name type="synonym">Gnetum scandens var. parvifolium</name>
    <dbReference type="NCBI Taxonomy" id="33153"/>
    <lineage>
        <taxon>Eukaryota</taxon>
        <taxon>Viridiplantae</taxon>
        <taxon>Streptophyta</taxon>
        <taxon>Embryophyta</taxon>
        <taxon>Tracheophyta</taxon>
        <taxon>Spermatophyta</taxon>
        <taxon>Gnetopsida</taxon>
        <taxon>Gnetidae</taxon>
        <taxon>Gnetales</taxon>
        <taxon>Gnetaceae</taxon>
        <taxon>Gnetum</taxon>
    </lineage>
</organism>
<geneLocation type="chloroplast"/>
<keyword id="KW-0150">Chloroplast</keyword>
<keyword id="KW-0472">Membrane</keyword>
<keyword id="KW-0602">Photosynthesis</keyword>
<keyword id="KW-0934">Plastid</keyword>
<keyword id="KW-0793">Thylakoid</keyword>
<keyword id="KW-0812">Transmembrane</keyword>
<keyword id="KW-1133">Transmembrane helix</keyword>
<evidence type="ECO:0000255" key="1">
    <source>
        <dbReference type="HAMAP-Rule" id="MF_00437"/>
    </source>
</evidence>
<evidence type="ECO:0000305" key="2"/>
<reference key="1">
    <citation type="journal article" date="2007" name="Mol. Biol. Evol.">
        <title>Chloroplast genome (cpDNA) of Cycas taitungensis and 56 cp protein-coding genes of Gnetum parvifolium: insights into cpDNA evolution and phylogeny of extant seed plants.</title>
        <authorList>
            <person name="Wu C.-S."/>
            <person name="Wang Y.-N."/>
            <person name="Liu S.-M."/>
            <person name="Chaw S.-M."/>
        </authorList>
    </citation>
    <scope>NUCLEOTIDE SEQUENCE [LARGE SCALE GENOMIC DNA]</scope>
</reference>
<reference key="2">
    <citation type="journal article" date="2009" name="Mol. Phylogenet. Evol.">
        <title>Evolution of reduced and compact chloroplast genomes (cpDNAs) in gnetophytes: Selection toward a lower-cost strategy.</title>
        <authorList>
            <person name="Wu C.-S."/>
            <person name="Lai Y.-T."/>
            <person name="Lin C.-P."/>
            <person name="Wang Y.-N."/>
            <person name="Chaw S.-M."/>
        </authorList>
    </citation>
    <scope>NUCLEOTIDE SEQUENCE [LARGE SCALE GENOMIC DNA]</scope>
</reference>
<accession>A6BM63</accession>
<accession>B7ZIA3</accession>
<gene>
    <name evidence="1" type="primary">ycf4</name>
</gene>